<proteinExistence type="evidence at protein level"/>
<feature type="chain" id="PRO_0000419461" description="Thiosulfate sulfurtransferase/rhodanese-like domain-containing protein 3">
    <location>
        <begin position="1"/>
        <end position="157"/>
    </location>
</feature>
<feature type="domain" description="Rhodanese" evidence="1">
    <location>
        <begin position="52"/>
        <end position="154"/>
    </location>
</feature>
<feature type="active site" description="Cysteine persulfide intermediate" evidence="1">
    <location>
        <position position="114"/>
    </location>
</feature>
<feature type="modified residue" description="N6-succinyllysine" evidence="2">
    <location>
        <position position="96"/>
    </location>
</feature>
<accession>Q9D0B5</accession>
<protein>
    <recommendedName>
        <fullName>Thiosulfate sulfurtransferase/rhodanese-like domain-containing protein 3</fullName>
    </recommendedName>
    <alternativeName>
        <fullName>Rhodanese domain-containing protein 3</fullName>
    </alternativeName>
</protein>
<gene>
    <name type="primary">Tstd3</name>
</gene>
<organism>
    <name type="scientific">Mus musculus</name>
    <name type="common">Mouse</name>
    <dbReference type="NCBI Taxonomy" id="10090"/>
    <lineage>
        <taxon>Eukaryota</taxon>
        <taxon>Metazoa</taxon>
        <taxon>Chordata</taxon>
        <taxon>Craniata</taxon>
        <taxon>Vertebrata</taxon>
        <taxon>Euteleostomi</taxon>
        <taxon>Mammalia</taxon>
        <taxon>Eutheria</taxon>
        <taxon>Euarchontoglires</taxon>
        <taxon>Glires</taxon>
        <taxon>Rodentia</taxon>
        <taxon>Myomorpha</taxon>
        <taxon>Muroidea</taxon>
        <taxon>Muridae</taxon>
        <taxon>Murinae</taxon>
        <taxon>Mus</taxon>
        <taxon>Mus</taxon>
    </lineage>
</organism>
<name>TSTD3_MOUSE</name>
<evidence type="ECO:0000255" key="1">
    <source>
        <dbReference type="PROSITE-ProRule" id="PRU00173"/>
    </source>
</evidence>
<evidence type="ECO:0007744" key="2">
    <source>
    </source>
</evidence>
<sequence length="157" mass="17271">MLARLVLGTSGRAALGSVEPALGGLKSIWRCSQAFCSTPKGVTYRELKSLLNSKDIMLIDVRNTLEILEQGKIPGSINIPLDEVGEALQMNPVDFKEKYCQVKPSKSDRLVFSCLAGVRSKKAMDTAISLGFNSAQHYAGGWKEWVTYEISEEKQES</sequence>
<dbReference type="EMBL" id="AK011611">
    <property type="protein sequence ID" value="BAB27732.1"/>
    <property type="molecule type" value="mRNA"/>
</dbReference>
<dbReference type="EMBL" id="AK154853">
    <property type="protein sequence ID" value="BAE32878.1"/>
    <property type="molecule type" value="mRNA"/>
</dbReference>
<dbReference type="EMBL" id="AL772187">
    <property type="status" value="NOT_ANNOTATED_CDS"/>
    <property type="molecule type" value="Genomic_DNA"/>
</dbReference>
<dbReference type="CCDS" id="CCDS51128.1"/>
<dbReference type="RefSeq" id="NP_084116.1">
    <property type="nucleotide sequence ID" value="NM_029840.1"/>
</dbReference>
<dbReference type="SMR" id="Q9D0B5"/>
<dbReference type="FunCoup" id="Q9D0B5">
    <property type="interactions" value="28"/>
</dbReference>
<dbReference type="STRING" id="10090.ENSMUSP00000029915"/>
<dbReference type="iPTMnet" id="Q9D0B5"/>
<dbReference type="PhosphoSitePlus" id="Q9D0B5"/>
<dbReference type="SwissPalm" id="Q9D0B5"/>
<dbReference type="jPOST" id="Q9D0B5"/>
<dbReference type="PaxDb" id="10090-ENSMUSP00000029915"/>
<dbReference type="PeptideAtlas" id="Q9D0B5"/>
<dbReference type="ProteomicsDB" id="298322"/>
<dbReference type="Pumba" id="Q9D0B5"/>
<dbReference type="Ensembl" id="ENSMUST00000029915.6">
    <property type="protein sequence ID" value="ENSMUSP00000029915.6"/>
    <property type="gene ID" value="ENSMUSG00000028251.6"/>
</dbReference>
<dbReference type="GeneID" id="77032"/>
<dbReference type="KEGG" id="mmu:77032"/>
<dbReference type="UCSC" id="uc008scx.2">
    <property type="organism name" value="mouse"/>
</dbReference>
<dbReference type="AGR" id="MGI:1924282"/>
<dbReference type="CTD" id="100130890"/>
<dbReference type="MGI" id="MGI:1924282">
    <property type="gene designation" value="Tstd3"/>
</dbReference>
<dbReference type="VEuPathDB" id="HostDB:ENSMUSG00000028251"/>
<dbReference type="eggNOG" id="KOG1530">
    <property type="taxonomic scope" value="Eukaryota"/>
</dbReference>
<dbReference type="GeneTree" id="ENSGT00940000164601"/>
<dbReference type="HOGENOM" id="CLU_089574_0_2_1"/>
<dbReference type="InParanoid" id="Q9D0B5"/>
<dbReference type="OMA" id="KEWVTYE"/>
<dbReference type="OrthoDB" id="566238at2759"/>
<dbReference type="PhylomeDB" id="Q9D0B5"/>
<dbReference type="TreeFam" id="TF323321"/>
<dbReference type="BioGRID-ORCS" id="77032">
    <property type="hits" value="1 hit in 76 CRISPR screens"/>
</dbReference>
<dbReference type="PRO" id="PR:Q9D0B5"/>
<dbReference type="Proteomes" id="UP000000589">
    <property type="component" value="Chromosome 4"/>
</dbReference>
<dbReference type="RNAct" id="Q9D0B5">
    <property type="molecule type" value="protein"/>
</dbReference>
<dbReference type="Bgee" id="ENSMUSG00000028251">
    <property type="expression patterns" value="Expressed in small intestine Peyer's patch and 223 other cell types or tissues"/>
</dbReference>
<dbReference type="GO" id="GO:0004792">
    <property type="term" value="F:thiosulfate-cyanide sulfurtransferase activity"/>
    <property type="evidence" value="ECO:0007669"/>
    <property type="project" value="InterPro"/>
</dbReference>
<dbReference type="CDD" id="cd01519">
    <property type="entry name" value="RHOD_HSP67B2"/>
    <property type="match status" value="1"/>
</dbReference>
<dbReference type="Gene3D" id="3.40.250.10">
    <property type="entry name" value="Rhodanese-like domain"/>
    <property type="match status" value="1"/>
</dbReference>
<dbReference type="InterPro" id="IPR001763">
    <property type="entry name" value="Rhodanese-like_dom"/>
</dbReference>
<dbReference type="InterPro" id="IPR036873">
    <property type="entry name" value="Rhodanese-like_dom_sf"/>
</dbReference>
<dbReference type="InterPro" id="IPR001307">
    <property type="entry name" value="Thiosulphate_STrfase_CS"/>
</dbReference>
<dbReference type="PANTHER" id="PTHR44086">
    <property type="entry name" value="THIOSULFATE SULFURTRANSFERASE RDL2, MITOCHONDRIAL-RELATED"/>
    <property type="match status" value="1"/>
</dbReference>
<dbReference type="PANTHER" id="PTHR44086:SF10">
    <property type="entry name" value="THIOSULFATE SULFURTRANSFERASE_RHODANESE-LIKE DOMAIN-CONTAINING PROTEIN 3"/>
    <property type="match status" value="1"/>
</dbReference>
<dbReference type="Pfam" id="PF00581">
    <property type="entry name" value="Rhodanese"/>
    <property type="match status" value="1"/>
</dbReference>
<dbReference type="SMART" id="SM00450">
    <property type="entry name" value="RHOD"/>
    <property type="match status" value="1"/>
</dbReference>
<dbReference type="SUPFAM" id="SSF52821">
    <property type="entry name" value="Rhodanese/Cell cycle control phosphatase"/>
    <property type="match status" value="1"/>
</dbReference>
<dbReference type="PROSITE" id="PS00683">
    <property type="entry name" value="RHODANESE_2"/>
    <property type="match status" value="1"/>
</dbReference>
<dbReference type="PROSITE" id="PS50206">
    <property type="entry name" value="RHODANESE_3"/>
    <property type="match status" value="1"/>
</dbReference>
<keyword id="KW-1185">Reference proteome</keyword>
<reference key="1">
    <citation type="journal article" date="2005" name="Science">
        <title>The transcriptional landscape of the mammalian genome.</title>
        <authorList>
            <person name="Carninci P."/>
            <person name="Kasukawa T."/>
            <person name="Katayama S."/>
            <person name="Gough J."/>
            <person name="Frith M.C."/>
            <person name="Maeda N."/>
            <person name="Oyama R."/>
            <person name="Ravasi T."/>
            <person name="Lenhard B."/>
            <person name="Wells C."/>
            <person name="Kodzius R."/>
            <person name="Shimokawa K."/>
            <person name="Bajic V.B."/>
            <person name="Brenner S.E."/>
            <person name="Batalov S."/>
            <person name="Forrest A.R."/>
            <person name="Zavolan M."/>
            <person name="Davis M.J."/>
            <person name="Wilming L.G."/>
            <person name="Aidinis V."/>
            <person name="Allen J.E."/>
            <person name="Ambesi-Impiombato A."/>
            <person name="Apweiler R."/>
            <person name="Aturaliya R.N."/>
            <person name="Bailey T.L."/>
            <person name="Bansal M."/>
            <person name="Baxter L."/>
            <person name="Beisel K.W."/>
            <person name="Bersano T."/>
            <person name="Bono H."/>
            <person name="Chalk A.M."/>
            <person name="Chiu K.P."/>
            <person name="Choudhary V."/>
            <person name="Christoffels A."/>
            <person name="Clutterbuck D.R."/>
            <person name="Crowe M.L."/>
            <person name="Dalla E."/>
            <person name="Dalrymple B.P."/>
            <person name="de Bono B."/>
            <person name="Della Gatta G."/>
            <person name="di Bernardo D."/>
            <person name="Down T."/>
            <person name="Engstrom P."/>
            <person name="Fagiolini M."/>
            <person name="Faulkner G."/>
            <person name="Fletcher C.F."/>
            <person name="Fukushima T."/>
            <person name="Furuno M."/>
            <person name="Futaki S."/>
            <person name="Gariboldi M."/>
            <person name="Georgii-Hemming P."/>
            <person name="Gingeras T.R."/>
            <person name="Gojobori T."/>
            <person name="Green R.E."/>
            <person name="Gustincich S."/>
            <person name="Harbers M."/>
            <person name="Hayashi Y."/>
            <person name="Hensch T.K."/>
            <person name="Hirokawa N."/>
            <person name="Hill D."/>
            <person name="Huminiecki L."/>
            <person name="Iacono M."/>
            <person name="Ikeo K."/>
            <person name="Iwama A."/>
            <person name="Ishikawa T."/>
            <person name="Jakt M."/>
            <person name="Kanapin A."/>
            <person name="Katoh M."/>
            <person name="Kawasawa Y."/>
            <person name="Kelso J."/>
            <person name="Kitamura H."/>
            <person name="Kitano H."/>
            <person name="Kollias G."/>
            <person name="Krishnan S.P."/>
            <person name="Kruger A."/>
            <person name="Kummerfeld S.K."/>
            <person name="Kurochkin I.V."/>
            <person name="Lareau L.F."/>
            <person name="Lazarevic D."/>
            <person name="Lipovich L."/>
            <person name="Liu J."/>
            <person name="Liuni S."/>
            <person name="McWilliam S."/>
            <person name="Madan Babu M."/>
            <person name="Madera M."/>
            <person name="Marchionni L."/>
            <person name="Matsuda H."/>
            <person name="Matsuzawa S."/>
            <person name="Miki H."/>
            <person name="Mignone F."/>
            <person name="Miyake S."/>
            <person name="Morris K."/>
            <person name="Mottagui-Tabar S."/>
            <person name="Mulder N."/>
            <person name="Nakano N."/>
            <person name="Nakauchi H."/>
            <person name="Ng P."/>
            <person name="Nilsson R."/>
            <person name="Nishiguchi S."/>
            <person name="Nishikawa S."/>
            <person name="Nori F."/>
            <person name="Ohara O."/>
            <person name="Okazaki Y."/>
            <person name="Orlando V."/>
            <person name="Pang K.C."/>
            <person name="Pavan W.J."/>
            <person name="Pavesi G."/>
            <person name="Pesole G."/>
            <person name="Petrovsky N."/>
            <person name="Piazza S."/>
            <person name="Reed J."/>
            <person name="Reid J.F."/>
            <person name="Ring B.Z."/>
            <person name="Ringwald M."/>
            <person name="Rost B."/>
            <person name="Ruan Y."/>
            <person name="Salzberg S.L."/>
            <person name="Sandelin A."/>
            <person name="Schneider C."/>
            <person name="Schoenbach C."/>
            <person name="Sekiguchi K."/>
            <person name="Semple C.A."/>
            <person name="Seno S."/>
            <person name="Sessa L."/>
            <person name="Sheng Y."/>
            <person name="Shibata Y."/>
            <person name="Shimada H."/>
            <person name="Shimada K."/>
            <person name="Silva D."/>
            <person name="Sinclair B."/>
            <person name="Sperling S."/>
            <person name="Stupka E."/>
            <person name="Sugiura K."/>
            <person name="Sultana R."/>
            <person name="Takenaka Y."/>
            <person name="Taki K."/>
            <person name="Tammoja K."/>
            <person name="Tan S.L."/>
            <person name="Tang S."/>
            <person name="Taylor M.S."/>
            <person name="Tegner J."/>
            <person name="Teichmann S.A."/>
            <person name="Ueda H.R."/>
            <person name="van Nimwegen E."/>
            <person name="Verardo R."/>
            <person name="Wei C.L."/>
            <person name="Yagi K."/>
            <person name="Yamanishi H."/>
            <person name="Zabarovsky E."/>
            <person name="Zhu S."/>
            <person name="Zimmer A."/>
            <person name="Hide W."/>
            <person name="Bult C."/>
            <person name="Grimmond S.M."/>
            <person name="Teasdale R.D."/>
            <person name="Liu E.T."/>
            <person name="Brusic V."/>
            <person name="Quackenbush J."/>
            <person name="Wahlestedt C."/>
            <person name="Mattick J.S."/>
            <person name="Hume D.A."/>
            <person name="Kai C."/>
            <person name="Sasaki D."/>
            <person name="Tomaru Y."/>
            <person name="Fukuda S."/>
            <person name="Kanamori-Katayama M."/>
            <person name="Suzuki M."/>
            <person name="Aoki J."/>
            <person name="Arakawa T."/>
            <person name="Iida J."/>
            <person name="Imamura K."/>
            <person name="Itoh M."/>
            <person name="Kato T."/>
            <person name="Kawaji H."/>
            <person name="Kawagashira N."/>
            <person name="Kawashima T."/>
            <person name="Kojima M."/>
            <person name="Kondo S."/>
            <person name="Konno H."/>
            <person name="Nakano K."/>
            <person name="Ninomiya N."/>
            <person name="Nishio T."/>
            <person name="Okada M."/>
            <person name="Plessy C."/>
            <person name="Shibata K."/>
            <person name="Shiraki T."/>
            <person name="Suzuki S."/>
            <person name="Tagami M."/>
            <person name="Waki K."/>
            <person name="Watahiki A."/>
            <person name="Okamura-Oho Y."/>
            <person name="Suzuki H."/>
            <person name="Kawai J."/>
            <person name="Hayashizaki Y."/>
        </authorList>
    </citation>
    <scope>NUCLEOTIDE SEQUENCE [LARGE SCALE MRNA]</scope>
    <source>
        <strain>C57BL/6J</strain>
        <strain>NOD</strain>
    </source>
</reference>
<reference key="2">
    <citation type="journal article" date="2009" name="PLoS Biol.">
        <title>Lineage-specific biology revealed by a finished genome assembly of the mouse.</title>
        <authorList>
            <person name="Church D.M."/>
            <person name="Goodstadt L."/>
            <person name="Hillier L.W."/>
            <person name="Zody M.C."/>
            <person name="Goldstein S."/>
            <person name="She X."/>
            <person name="Bult C.J."/>
            <person name="Agarwala R."/>
            <person name="Cherry J.L."/>
            <person name="DiCuccio M."/>
            <person name="Hlavina W."/>
            <person name="Kapustin Y."/>
            <person name="Meric P."/>
            <person name="Maglott D."/>
            <person name="Birtle Z."/>
            <person name="Marques A.C."/>
            <person name="Graves T."/>
            <person name="Zhou S."/>
            <person name="Teague B."/>
            <person name="Potamousis K."/>
            <person name="Churas C."/>
            <person name="Place M."/>
            <person name="Herschleb J."/>
            <person name="Runnheim R."/>
            <person name="Forrest D."/>
            <person name="Amos-Landgraf J."/>
            <person name="Schwartz D.C."/>
            <person name="Cheng Z."/>
            <person name="Lindblad-Toh K."/>
            <person name="Eichler E.E."/>
            <person name="Ponting C.P."/>
        </authorList>
    </citation>
    <scope>NUCLEOTIDE SEQUENCE [LARGE SCALE GENOMIC DNA]</scope>
    <source>
        <strain>C57BL/6J</strain>
    </source>
</reference>
<reference key="3">
    <citation type="journal article" date="2010" name="Cell">
        <title>A tissue-specific atlas of mouse protein phosphorylation and expression.</title>
        <authorList>
            <person name="Huttlin E.L."/>
            <person name="Jedrychowski M.P."/>
            <person name="Elias J.E."/>
            <person name="Goswami T."/>
            <person name="Rad R."/>
            <person name="Beausoleil S.A."/>
            <person name="Villen J."/>
            <person name="Haas W."/>
            <person name="Sowa M.E."/>
            <person name="Gygi S.P."/>
        </authorList>
    </citation>
    <scope>IDENTIFICATION BY MASS SPECTROMETRY [LARGE SCALE ANALYSIS]</scope>
    <source>
        <tissue>Brain</tissue>
        <tissue>Brown adipose tissue</tissue>
        <tissue>Heart</tissue>
        <tissue>Kidney</tissue>
        <tissue>Liver</tissue>
        <tissue>Pancreas</tissue>
    </source>
</reference>
<reference key="4">
    <citation type="journal article" date="2013" name="Mol. Cell">
        <title>SIRT5-mediated lysine desuccinylation impacts diverse metabolic pathways.</title>
        <authorList>
            <person name="Park J."/>
            <person name="Chen Y."/>
            <person name="Tishkoff D.X."/>
            <person name="Peng C."/>
            <person name="Tan M."/>
            <person name="Dai L."/>
            <person name="Xie Z."/>
            <person name="Zhang Y."/>
            <person name="Zwaans B.M."/>
            <person name="Skinner M.E."/>
            <person name="Lombard D.B."/>
            <person name="Zhao Y."/>
        </authorList>
    </citation>
    <scope>SUCCINYLATION [LARGE SCALE ANALYSIS] AT LYS-96</scope>
    <scope>IDENTIFICATION BY MASS SPECTROMETRY [LARGE SCALE ANALYSIS]</scope>
    <source>
        <tissue>Liver</tissue>
    </source>
</reference>